<protein>
    <recommendedName>
        <fullName>F-box/LRR-repeat protein 10</fullName>
    </recommendedName>
</protein>
<feature type="chain" id="PRO_0000272251" description="F-box/LRR-repeat protein 10">
    <location>
        <begin position="1"/>
        <end position="656"/>
    </location>
</feature>
<feature type="domain" description="F-box" evidence="1">
    <location>
        <begin position="20"/>
        <end position="66"/>
    </location>
</feature>
<feature type="repeat" description="LRR 1">
    <location>
        <begin position="71"/>
        <end position="96"/>
    </location>
</feature>
<feature type="repeat" description="LRR 2">
    <location>
        <begin position="120"/>
        <end position="145"/>
    </location>
</feature>
<feature type="repeat" description="LRR 3">
    <location>
        <begin position="151"/>
        <end position="176"/>
    </location>
</feature>
<feature type="repeat" description="LRR 4">
    <location>
        <begin position="194"/>
        <end position="221"/>
    </location>
</feature>
<feature type="repeat" description="LRR 5">
    <location>
        <begin position="243"/>
        <end position="268"/>
    </location>
</feature>
<feature type="repeat" description="LRR 6">
    <location>
        <begin position="277"/>
        <end position="301"/>
    </location>
</feature>
<feature type="repeat" description="LRR 7">
    <location>
        <begin position="310"/>
        <end position="335"/>
    </location>
</feature>
<feature type="repeat" description="LRR 8">
    <location>
        <begin position="336"/>
        <end position="361"/>
    </location>
</feature>
<feature type="repeat" description="LRR 9">
    <location>
        <begin position="362"/>
        <end position="387"/>
    </location>
</feature>
<feature type="repeat" description="LRR 10">
    <location>
        <begin position="388"/>
        <end position="412"/>
    </location>
</feature>
<feature type="repeat" description="LRR 11">
    <location>
        <begin position="413"/>
        <end position="437"/>
    </location>
</feature>
<feature type="repeat" description="LRR 12">
    <location>
        <begin position="439"/>
        <end position="463"/>
    </location>
</feature>
<feature type="repeat" description="LRR 13">
    <location>
        <begin position="464"/>
        <end position="491"/>
    </location>
</feature>
<feature type="repeat" description="LRR 14">
    <location>
        <begin position="492"/>
        <end position="517"/>
    </location>
</feature>
<feature type="repeat" description="LRR 15">
    <location>
        <begin position="518"/>
        <end position="551"/>
    </location>
</feature>
<feature type="repeat" description="LRR 16">
    <location>
        <begin position="552"/>
        <end position="578"/>
    </location>
</feature>
<feature type="region of interest" description="Disordered" evidence="2">
    <location>
        <begin position="632"/>
        <end position="656"/>
    </location>
</feature>
<proteinExistence type="evidence at transcript level"/>
<evidence type="ECO:0000255" key="1">
    <source>
        <dbReference type="PROSITE-ProRule" id="PRU00080"/>
    </source>
</evidence>
<evidence type="ECO:0000256" key="2">
    <source>
        <dbReference type="SAM" id="MobiDB-lite"/>
    </source>
</evidence>
<evidence type="ECO:0000305" key="3"/>
<gene>
    <name type="primary">FBL10</name>
    <name type="ordered locus">At2g17020</name>
    <name type="ORF">F6P23.18</name>
</gene>
<dbReference type="EMBL" id="CP002685">
    <property type="protein sequence ID" value="AEC06573.1"/>
    <property type="molecule type" value="Genomic_DNA"/>
</dbReference>
<dbReference type="EMBL" id="AF367303">
    <property type="protein sequence ID" value="AAK32890.1"/>
    <property type="molecule type" value="mRNA"/>
</dbReference>
<dbReference type="EMBL" id="AY133615">
    <property type="protein sequence ID" value="AAM91445.1"/>
    <property type="molecule type" value="mRNA"/>
</dbReference>
<dbReference type="EMBL" id="AY085127">
    <property type="protein sequence ID" value="AAM61680.1"/>
    <property type="status" value="ALT_INIT"/>
    <property type="molecule type" value="mRNA"/>
</dbReference>
<dbReference type="PIR" id="B84547">
    <property type="entry name" value="B84547"/>
</dbReference>
<dbReference type="RefSeq" id="NP_565400.1">
    <property type="nucleotide sequence ID" value="NM_127255.4"/>
</dbReference>
<dbReference type="SMR" id="Q9SDA8"/>
<dbReference type="BioGRID" id="1562">
    <property type="interactions" value="5"/>
</dbReference>
<dbReference type="FunCoup" id="Q9SDA8">
    <property type="interactions" value="2240"/>
</dbReference>
<dbReference type="STRING" id="3702.Q9SDA8"/>
<dbReference type="PaxDb" id="3702-AT2G17020.1"/>
<dbReference type="EnsemblPlants" id="AT2G17020.1">
    <property type="protein sequence ID" value="AT2G17020.1"/>
    <property type="gene ID" value="AT2G17020"/>
</dbReference>
<dbReference type="GeneID" id="816205"/>
<dbReference type="Gramene" id="AT2G17020.1">
    <property type="protein sequence ID" value="AT2G17020.1"/>
    <property type="gene ID" value="AT2G17020"/>
</dbReference>
<dbReference type="KEGG" id="ath:AT2G17020"/>
<dbReference type="Araport" id="AT2G17020"/>
<dbReference type="TAIR" id="AT2G17020"/>
<dbReference type="eggNOG" id="KOG1947">
    <property type="taxonomic scope" value="Eukaryota"/>
</dbReference>
<dbReference type="HOGENOM" id="CLU_036665_0_0_1"/>
<dbReference type="InParanoid" id="Q9SDA8"/>
<dbReference type="OMA" id="WLLEADI"/>
<dbReference type="PhylomeDB" id="Q9SDA8"/>
<dbReference type="PRO" id="PR:Q9SDA8"/>
<dbReference type="Proteomes" id="UP000006548">
    <property type="component" value="Chromosome 2"/>
</dbReference>
<dbReference type="ExpressionAtlas" id="Q9SDA8">
    <property type="expression patterns" value="baseline and differential"/>
</dbReference>
<dbReference type="CDD" id="cd22117">
    <property type="entry name" value="F-box_FBXL4"/>
    <property type="match status" value="1"/>
</dbReference>
<dbReference type="FunFam" id="3.80.10.10:FF:000494">
    <property type="entry name" value="F-box/LRR-repeat protein 10 isoform A"/>
    <property type="match status" value="1"/>
</dbReference>
<dbReference type="Gene3D" id="3.80.10.10">
    <property type="entry name" value="Ribonuclease Inhibitor"/>
    <property type="match status" value="4"/>
</dbReference>
<dbReference type="InterPro" id="IPR036047">
    <property type="entry name" value="F-box-like_dom_sf"/>
</dbReference>
<dbReference type="InterPro" id="IPR001810">
    <property type="entry name" value="F-box_dom"/>
</dbReference>
<dbReference type="InterPro" id="IPR006553">
    <property type="entry name" value="Leu-rich_rpt_Cys-con_subtyp"/>
</dbReference>
<dbReference type="InterPro" id="IPR032675">
    <property type="entry name" value="LRR_dom_sf"/>
</dbReference>
<dbReference type="PANTHER" id="PTHR13318:SF95">
    <property type="entry name" value="F-BOX PROTEIN YLR352W"/>
    <property type="match status" value="1"/>
</dbReference>
<dbReference type="PANTHER" id="PTHR13318">
    <property type="entry name" value="PARTNER OF PAIRED, ISOFORM B-RELATED"/>
    <property type="match status" value="1"/>
</dbReference>
<dbReference type="Pfam" id="PF00646">
    <property type="entry name" value="F-box"/>
    <property type="match status" value="1"/>
</dbReference>
<dbReference type="SMART" id="SM00367">
    <property type="entry name" value="LRR_CC"/>
    <property type="match status" value="7"/>
</dbReference>
<dbReference type="SUPFAM" id="SSF81383">
    <property type="entry name" value="F-box domain"/>
    <property type="match status" value="1"/>
</dbReference>
<dbReference type="SUPFAM" id="SSF52047">
    <property type="entry name" value="RNI-like"/>
    <property type="match status" value="2"/>
</dbReference>
<dbReference type="PROSITE" id="PS50181">
    <property type="entry name" value="FBOX"/>
    <property type="match status" value="1"/>
</dbReference>
<comment type="sequence caution" evidence="3">
    <conflict type="erroneous initiation">
        <sequence resource="EMBL-CDS" id="AAM61680"/>
    </conflict>
</comment>
<sequence length="656" mass="72282">MATTTVVCGGGGDVEGCDGERSLDLLPAALLETIMTKLDVASLCSLASTCKTLKSCVTRVLTFTPNFHIFNVSLSMETVRPLLFPNQQLSSLKLDCGRLGNSAIDILVRPSLREISLHNCRDFSGDLISEIGRKCKDLRLLCLGSVAEKVGRSISRCALEDLLNGCSHLEVLALMFDLSLYLRPGDGRIFGLVSDRLTHLELGHITSRMMTQLLTSTEISGQDSNRVTTSTVLQNVQRLRLSVDCITDAVVKAISKSLPSLIDLDIRDAPLEDPRQVSDLTDFGLHEINQNGKLKHLSLIRSQEFHPTYFRRVSDQGMLFLADKCLGMETICLGGFCRVTDAGFKTILHSCASLSKFSIYHGPKLTDLVFHDILATTLSLSHVSLRRCHLLTDHAIQKLASSLKLENLDLRGCRNLRDETLTAVSHLPKLKVLLLDGADISDTGLSYLKEGVLDSLVSLSVRGCRNLTDKFMSTLFDGSSKLALRELDLSNLPNLTDAAIFALAKSGAPITKLQLRECRLIGDASVMALASTRVYEDECPGSSLCLLDLYDCGGITQLSFKWLKKPFFPRLKWLGITGSVNRDIVDALARRRPHLQVSCRGEELGNDGEDDWDSADIHQHIEAQEDELEQWILGDEGDVEMEDAEDESEEDASEED</sequence>
<keyword id="KW-0433">Leucine-rich repeat</keyword>
<keyword id="KW-1185">Reference proteome</keyword>
<keyword id="KW-0677">Repeat</keyword>
<accession>Q9SDA8</accession>
<accession>Q8LF00</accession>
<name>FBL10_ARATH</name>
<reference key="1">
    <citation type="journal article" date="1999" name="Nature">
        <title>Sequence and analysis of chromosome 2 of the plant Arabidopsis thaliana.</title>
        <authorList>
            <person name="Lin X."/>
            <person name="Kaul S."/>
            <person name="Rounsley S.D."/>
            <person name="Shea T.P."/>
            <person name="Benito M.-I."/>
            <person name="Town C.D."/>
            <person name="Fujii C.Y."/>
            <person name="Mason T.M."/>
            <person name="Bowman C.L."/>
            <person name="Barnstead M.E."/>
            <person name="Feldblyum T.V."/>
            <person name="Buell C.R."/>
            <person name="Ketchum K.A."/>
            <person name="Lee J.J."/>
            <person name="Ronning C.M."/>
            <person name="Koo H.L."/>
            <person name="Moffat K.S."/>
            <person name="Cronin L.A."/>
            <person name="Shen M."/>
            <person name="Pai G."/>
            <person name="Van Aken S."/>
            <person name="Umayam L."/>
            <person name="Tallon L.J."/>
            <person name="Gill J.E."/>
            <person name="Adams M.D."/>
            <person name="Carrera A.J."/>
            <person name="Creasy T.H."/>
            <person name="Goodman H.M."/>
            <person name="Somerville C.R."/>
            <person name="Copenhaver G.P."/>
            <person name="Preuss D."/>
            <person name="Nierman W.C."/>
            <person name="White O."/>
            <person name="Eisen J.A."/>
            <person name="Salzberg S.L."/>
            <person name="Fraser C.M."/>
            <person name="Venter J.C."/>
        </authorList>
    </citation>
    <scope>NUCLEOTIDE SEQUENCE [LARGE SCALE GENOMIC DNA]</scope>
    <source>
        <strain>cv. Columbia</strain>
    </source>
</reference>
<reference key="2">
    <citation type="journal article" date="2017" name="Plant J.">
        <title>Araport11: a complete reannotation of the Arabidopsis thaliana reference genome.</title>
        <authorList>
            <person name="Cheng C.Y."/>
            <person name="Krishnakumar V."/>
            <person name="Chan A.P."/>
            <person name="Thibaud-Nissen F."/>
            <person name="Schobel S."/>
            <person name="Town C.D."/>
        </authorList>
    </citation>
    <scope>GENOME REANNOTATION</scope>
    <source>
        <strain>cv. Columbia</strain>
    </source>
</reference>
<reference key="3">
    <citation type="journal article" date="2003" name="Science">
        <title>Empirical analysis of transcriptional activity in the Arabidopsis genome.</title>
        <authorList>
            <person name="Yamada K."/>
            <person name="Lim J."/>
            <person name="Dale J.M."/>
            <person name="Chen H."/>
            <person name="Shinn P."/>
            <person name="Palm C.J."/>
            <person name="Southwick A.M."/>
            <person name="Wu H.C."/>
            <person name="Kim C.J."/>
            <person name="Nguyen M."/>
            <person name="Pham P.K."/>
            <person name="Cheuk R.F."/>
            <person name="Karlin-Newmann G."/>
            <person name="Liu S.X."/>
            <person name="Lam B."/>
            <person name="Sakano H."/>
            <person name="Wu T."/>
            <person name="Yu G."/>
            <person name="Miranda M."/>
            <person name="Quach H.L."/>
            <person name="Tripp M."/>
            <person name="Chang C.H."/>
            <person name="Lee J.M."/>
            <person name="Toriumi M.J."/>
            <person name="Chan M.M."/>
            <person name="Tang C.C."/>
            <person name="Onodera C.S."/>
            <person name="Deng J.M."/>
            <person name="Akiyama K."/>
            <person name="Ansari Y."/>
            <person name="Arakawa T."/>
            <person name="Banh J."/>
            <person name="Banno F."/>
            <person name="Bowser L."/>
            <person name="Brooks S.Y."/>
            <person name="Carninci P."/>
            <person name="Chao Q."/>
            <person name="Choy N."/>
            <person name="Enju A."/>
            <person name="Goldsmith A.D."/>
            <person name="Gurjal M."/>
            <person name="Hansen N.F."/>
            <person name="Hayashizaki Y."/>
            <person name="Johnson-Hopson C."/>
            <person name="Hsuan V.W."/>
            <person name="Iida K."/>
            <person name="Karnes M."/>
            <person name="Khan S."/>
            <person name="Koesema E."/>
            <person name="Ishida J."/>
            <person name="Jiang P.X."/>
            <person name="Jones T."/>
            <person name="Kawai J."/>
            <person name="Kamiya A."/>
            <person name="Meyers C."/>
            <person name="Nakajima M."/>
            <person name="Narusaka M."/>
            <person name="Seki M."/>
            <person name="Sakurai T."/>
            <person name="Satou M."/>
            <person name="Tamse R."/>
            <person name="Vaysberg M."/>
            <person name="Wallender E.K."/>
            <person name="Wong C."/>
            <person name="Yamamura Y."/>
            <person name="Yuan S."/>
            <person name="Shinozaki K."/>
            <person name="Davis R.W."/>
            <person name="Theologis A."/>
            <person name="Ecker J.R."/>
        </authorList>
    </citation>
    <scope>NUCLEOTIDE SEQUENCE [LARGE SCALE MRNA]</scope>
    <source>
        <strain>cv. Columbia</strain>
    </source>
</reference>
<reference key="4">
    <citation type="submission" date="2002-03" db="EMBL/GenBank/DDBJ databases">
        <title>Full-length cDNA from Arabidopsis thaliana.</title>
        <authorList>
            <person name="Brover V.V."/>
            <person name="Troukhan M.E."/>
            <person name="Alexandrov N.A."/>
            <person name="Lu Y.-P."/>
            <person name="Flavell R.B."/>
            <person name="Feldmann K.A."/>
        </authorList>
    </citation>
    <scope>NUCLEOTIDE SEQUENCE [LARGE SCALE MRNA] OF 473-656</scope>
</reference>
<reference key="5">
    <citation type="journal article" date="2000" name="Trends Plant Sci.">
        <title>F-box proteins in Arabidopsis.</title>
        <authorList>
            <person name="Xiao W."/>
            <person name="Jang J.-C."/>
        </authorList>
    </citation>
    <scope>GENE FAMILY</scope>
    <scope>NOMENCLATURE</scope>
</reference>
<organism>
    <name type="scientific">Arabidopsis thaliana</name>
    <name type="common">Mouse-ear cress</name>
    <dbReference type="NCBI Taxonomy" id="3702"/>
    <lineage>
        <taxon>Eukaryota</taxon>
        <taxon>Viridiplantae</taxon>
        <taxon>Streptophyta</taxon>
        <taxon>Embryophyta</taxon>
        <taxon>Tracheophyta</taxon>
        <taxon>Spermatophyta</taxon>
        <taxon>Magnoliopsida</taxon>
        <taxon>eudicotyledons</taxon>
        <taxon>Gunneridae</taxon>
        <taxon>Pentapetalae</taxon>
        <taxon>rosids</taxon>
        <taxon>malvids</taxon>
        <taxon>Brassicales</taxon>
        <taxon>Brassicaceae</taxon>
        <taxon>Camelineae</taxon>
        <taxon>Arabidopsis</taxon>
    </lineage>
</organism>